<protein>
    <recommendedName>
        <fullName evidence="1">Small ribosomal subunit protein uS11m</fullName>
    </recommendedName>
    <alternativeName>
        <fullName>Ribosomal protein S11, mitochondrial</fullName>
    </alternativeName>
</protein>
<comment type="subcellular location">
    <subcellularLocation>
        <location>Mitochondrion</location>
    </subcellularLocation>
</comment>
<comment type="similarity">
    <text evidence="1">Belongs to the universal ribosomal protein uS11 family.</text>
</comment>
<feature type="chain" id="PRO_0000123333" description="Small ribosomal subunit protein uS11m">
    <location>
        <begin position="1"/>
        <end position="128"/>
    </location>
</feature>
<keyword id="KW-0496">Mitochondrion</keyword>
<keyword id="KW-0687">Ribonucleoprotein</keyword>
<keyword id="KW-0689">Ribosomal protein</keyword>
<name>RT11_PROWI</name>
<evidence type="ECO:0000305" key="1"/>
<geneLocation type="mitochondrion"/>
<sequence length="128" mass="13992">MLVKKSQISRKFIEKKSGIVHIQSTTNNTLITLTDLEGNTQFFVSAGTLGFKNSRKSTVYASGAAAEALASKAFNEGYRTIIVKIKGLGYGKKSAIRGLQKSNLVIKQIQEVTPIAHNGCRPPKKRRV</sequence>
<organism>
    <name type="scientific">Prototheca wickerhamii</name>
    <dbReference type="NCBI Taxonomy" id="3111"/>
    <lineage>
        <taxon>Eukaryota</taxon>
        <taxon>Viridiplantae</taxon>
        <taxon>Chlorophyta</taxon>
        <taxon>core chlorophytes</taxon>
        <taxon>Trebouxiophyceae</taxon>
        <taxon>Chlorellales</taxon>
        <taxon>Chlorellaceae</taxon>
        <taxon>Prototheca</taxon>
    </lineage>
</organism>
<proteinExistence type="inferred from homology"/>
<reference key="1">
    <citation type="journal article" date="1994" name="J. Mol. Biol.">
        <title>Complete sequence of the mitochondrial DNA of the chlorophyte alga Prototheca wickerhamii. Gene content and genome organization.</title>
        <authorList>
            <person name="Wolff G."/>
            <person name="Plante I."/>
            <person name="Lang B.F."/>
            <person name="Kueck U."/>
            <person name="Burger G."/>
        </authorList>
    </citation>
    <scope>NUCLEOTIDE SEQUENCE [GENOMIC DNA]</scope>
    <source>
        <strain>263-11</strain>
    </source>
</reference>
<dbReference type="EMBL" id="U02970">
    <property type="protein sequence ID" value="AAD12645.1"/>
    <property type="molecule type" value="Genomic_DNA"/>
</dbReference>
<dbReference type="PIR" id="T11926">
    <property type="entry name" value="T11926"/>
</dbReference>
<dbReference type="RefSeq" id="NP_042257.1">
    <property type="nucleotide sequence ID" value="NC_001613.1"/>
</dbReference>
<dbReference type="SMR" id="P46746"/>
<dbReference type="GeneID" id="802140"/>
<dbReference type="GO" id="GO:0005763">
    <property type="term" value="C:mitochondrial small ribosomal subunit"/>
    <property type="evidence" value="ECO:0000250"/>
    <property type="project" value="UniProtKB"/>
</dbReference>
<dbReference type="GO" id="GO:0003735">
    <property type="term" value="F:structural constituent of ribosome"/>
    <property type="evidence" value="ECO:0007669"/>
    <property type="project" value="InterPro"/>
</dbReference>
<dbReference type="GO" id="GO:0006412">
    <property type="term" value="P:translation"/>
    <property type="evidence" value="ECO:0007669"/>
    <property type="project" value="InterPro"/>
</dbReference>
<dbReference type="FunFam" id="3.30.420.80:FF:000010">
    <property type="entry name" value="30S ribosomal protein S11"/>
    <property type="match status" value="1"/>
</dbReference>
<dbReference type="Gene3D" id="3.30.420.80">
    <property type="entry name" value="Ribosomal protein S11"/>
    <property type="match status" value="1"/>
</dbReference>
<dbReference type="HAMAP" id="MF_01310">
    <property type="entry name" value="Ribosomal_uS11"/>
    <property type="match status" value="1"/>
</dbReference>
<dbReference type="InterPro" id="IPR001971">
    <property type="entry name" value="Ribosomal_uS11"/>
</dbReference>
<dbReference type="InterPro" id="IPR018102">
    <property type="entry name" value="Ribosomal_uS11_CS"/>
</dbReference>
<dbReference type="InterPro" id="IPR036967">
    <property type="entry name" value="Ribosomal_uS11_sf"/>
</dbReference>
<dbReference type="NCBIfam" id="NF003698">
    <property type="entry name" value="PRK05309.1"/>
    <property type="match status" value="1"/>
</dbReference>
<dbReference type="PANTHER" id="PTHR11759">
    <property type="entry name" value="40S RIBOSOMAL PROTEIN S14/30S RIBOSOMAL PROTEIN S11"/>
    <property type="match status" value="1"/>
</dbReference>
<dbReference type="Pfam" id="PF00411">
    <property type="entry name" value="Ribosomal_S11"/>
    <property type="match status" value="1"/>
</dbReference>
<dbReference type="PIRSF" id="PIRSF002131">
    <property type="entry name" value="Ribosomal_S11"/>
    <property type="match status" value="1"/>
</dbReference>
<dbReference type="SUPFAM" id="SSF53137">
    <property type="entry name" value="Translational machinery components"/>
    <property type="match status" value="1"/>
</dbReference>
<dbReference type="PROSITE" id="PS00054">
    <property type="entry name" value="RIBOSOMAL_S11"/>
    <property type="match status" value="1"/>
</dbReference>
<gene>
    <name type="primary">RPS11</name>
</gene>
<accession>P46746</accession>